<organism>
    <name type="scientific">Rhodopseudomonas palustris (strain BisB5)</name>
    <dbReference type="NCBI Taxonomy" id="316057"/>
    <lineage>
        <taxon>Bacteria</taxon>
        <taxon>Pseudomonadati</taxon>
        <taxon>Pseudomonadota</taxon>
        <taxon>Alphaproteobacteria</taxon>
        <taxon>Hyphomicrobiales</taxon>
        <taxon>Nitrobacteraceae</taxon>
        <taxon>Rhodopseudomonas</taxon>
    </lineage>
</organism>
<gene>
    <name evidence="1" type="primary">ihfA</name>
    <name evidence="1" type="synonym">himA</name>
    <name type="ordered locus">RPD_2687</name>
</gene>
<protein>
    <recommendedName>
        <fullName evidence="1">Integration host factor subunit alpha</fullName>
        <shortName evidence="1">IHF-alpha</shortName>
    </recommendedName>
</protein>
<name>IHFA_RHOPS</name>
<feature type="chain" id="PRO_1000060563" description="Integration host factor subunit alpha">
    <location>
        <begin position="1"/>
        <end position="123"/>
    </location>
</feature>
<feature type="region of interest" description="Disordered" evidence="2">
    <location>
        <begin position="97"/>
        <end position="123"/>
    </location>
</feature>
<feature type="compositionally biased region" description="Low complexity" evidence="2">
    <location>
        <begin position="98"/>
        <end position="111"/>
    </location>
</feature>
<feature type="compositionally biased region" description="Basic and acidic residues" evidence="2">
    <location>
        <begin position="113"/>
        <end position="123"/>
    </location>
</feature>
<reference key="1">
    <citation type="submission" date="2006-03" db="EMBL/GenBank/DDBJ databases">
        <title>Complete sequence of Rhodopseudomonas palustris BisB5.</title>
        <authorList>
            <consortium name="US DOE Joint Genome Institute"/>
            <person name="Copeland A."/>
            <person name="Lucas S."/>
            <person name="Lapidus A."/>
            <person name="Barry K."/>
            <person name="Detter J.C."/>
            <person name="Glavina del Rio T."/>
            <person name="Hammon N."/>
            <person name="Israni S."/>
            <person name="Dalin E."/>
            <person name="Tice H."/>
            <person name="Pitluck S."/>
            <person name="Chain P."/>
            <person name="Malfatti S."/>
            <person name="Shin M."/>
            <person name="Vergez L."/>
            <person name="Schmutz J."/>
            <person name="Larimer F."/>
            <person name="Land M."/>
            <person name="Hauser L."/>
            <person name="Pelletier D.A."/>
            <person name="Kyrpides N."/>
            <person name="Lykidis A."/>
            <person name="Oda Y."/>
            <person name="Harwood C.S."/>
            <person name="Richardson P."/>
        </authorList>
    </citation>
    <scope>NUCLEOTIDE SEQUENCE [LARGE SCALE GENOMIC DNA]</scope>
    <source>
        <strain>BisB5</strain>
    </source>
</reference>
<keyword id="KW-0233">DNA recombination</keyword>
<keyword id="KW-0238">DNA-binding</keyword>
<keyword id="KW-0804">Transcription</keyword>
<keyword id="KW-0805">Transcription regulation</keyword>
<keyword id="KW-0810">Translation regulation</keyword>
<dbReference type="EMBL" id="CP000283">
    <property type="protein sequence ID" value="ABE39916.1"/>
    <property type="molecule type" value="Genomic_DNA"/>
</dbReference>
<dbReference type="SMR" id="Q136S3"/>
<dbReference type="STRING" id="316057.RPD_2687"/>
<dbReference type="KEGG" id="rpd:RPD_2687"/>
<dbReference type="eggNOG" id="COG0776">
    <property type="taxonomic scope" value="Bacteria"/>
</dbReference>
<dbReference type="HOGENOM" id="CLU_105066_1_1_5"/>
<dbReference type="BioCyc" id="RPAL316057:RPD_RS13510-MONOMER"/>
<dbReference type="Proteomes" id="UP000001818">
    <property type="component" value="Chromosome"/>
</dbReference>
<dbReference type="GO" id="GO:0005829">
    <property type="term" value="C:cytosol"/>
    <property type="evidence" value="ECO:0007669"/>
    <property type="project" value="TreeGrafter"/>
</dbReference>
<dbReference type="GO" id="GO:0003677">
    <property type="term" value="F:DNA binding"/>
    <property type="evidence" value="ECO:0007669"/>
    <property type="project" value="UniProtKB-UniRule"/>
</dbReference>
<dbReference type="GO" id="GO:0030527">
    <property type="term" value="F:structural constituent of chromatin"/>
    <property type="evidence" value="ECO:0007669"/>
    <property type="project" value="InterPro"/>
</dbReference>
<dbReference type="GO" id="GO:0006310">
    <property type="term" value="P:DNA recombination"/>
    <property type="evidence" value="ECO:0007669"/>
    <property type="project" value="UniProtKB-UniRule"/>
</dbReference>
<dbReference type="GO" id="GO:0009893">
    <property type="term" value="P:positive regulation of metabolic process"/>
    <property type="evidence" value="ECO:0007669"/>
    <property type="project" value="UniProtKB-ARBA"/>
</dbReference>
<dbReference type="GO" id="GO:0006355">
    <property type="term" value="P:regulation of DNA-templated transcription"/>
    <property type="evidence" value="ECO:0007669"/>
    <property type="project" value="UniProtKB-UniRule"/>
</dbReference>
<dbReference type="GO" id="GO:0006417">
    <property type="term" value="P:regulation of translation"/>
    <property type="evidence" value="ECO:0007669"/>
    <property type="project" value="UniProtKB-UniRule"/>
</dbReference>
<dbReference type="CDD" id="cd13835">
    <property type="entry name" value="IHF_A"/>
    <property type="match status" value="1"/>
</dbReference>
<dbReference type="FunFam" id="4.10.520.10:FF:000010">
    <property type="entry name" value="Integration host factor subunit alpha"/>
    <property type="match status" value="1"/>
</dbReference>
<dbReference type="Gene3D" id="4.10.520.10">
    <property type="entry name" value="IHF-like DNA-binding proteins"/>
    <property type="match status" value="1"/>
</dbReference>
<dbReference type="HAMAP" id="MF_00380">
    <property type="entry name" value="IHF_alpha"/>
    <property type="match status" value="1"/>
</dbReference>
<dbReference type="InterPro" id="IPR000119">
    <property type="entry name" value="Hist_DNA-bd"/>
</dbReference>
<dbReference type="InterPro" id="IPR020816">
    <property type="entry name" value="Histone-like_DNA-bd_CS"/>
</dbReference>
<dbReference type="InterPro" id="IPR010992">
    <property type="entry name" value="IHF-like_DNA-bd_dom_sf"/>
</dbReference>
<dbReference type="InterPro" id="IPR005684">
    <property type="entry name" value="IHF_alpha"/>
</dbReference>
<dbReference type="NCBIfam" id="TIGR00987">
    <property type="entry name" value="himA"/>
    <property type="match status" value="1"/>
</dbReference>
<dbReference type="NCBIfam" id="NF001401">
    <property type="entry name" value="PRK00285.1"/>
    <property type="match status" value="1"/>
</dbReference>
<dbReference type="PANTHER" id="PTHR33175">
    <property type="entry name" value="DNA-BINDING PROTEIN HU"/>
    <property type="match status" value="1"/>
</dbReference>
<dbReference type="PANTHER" id="PTHR33175:SF2">
    <property type="entry name" value="INTEGRATION HOST FACTOR SUBUNIT ALPHA"/>
    <property type="match status" value="1"/>
</dbReference>
<dbReference type="Pfam" id="PF00216">
    <property type="entry name" value="Bac_DNA_binding"/>
    <property type="match status" value="1"/>
</dbReference>
<dbReference type="PRINTS" id="PR01727">
    <property type="entry name" value="DNABINDINGHU"/>
</dbReference>
<dbReference type="SMART" id="SM00411">
    <property type="entry name" value="BHL"/>
    <property type="match status" value="1"/>
</dbReference>
<dbReference type="SUPFAM" id="SSF47729">
    <property type="entry name" value="IHF-like DNA-binding proteins"/>
    <property type="match status" value="1"/>
</dbReference>
<dbReference type="PROSITE" id="PS00045">
    <property type="entry name" value="HISTONE_LIKE"/>
    <property type="match status" value="1"/>
</dbReference>
<sequence>MTGTGRTVTRVDLCEAVYQKVGLSRTESSAFVELVLKEITDCLEKGETVKLSSFGSFLVRQKGQRIGRNPKTGTEVPISPRRVMVFKPSAILKQRINANGSAPSMSSSASAVDDDKSESASRT</sequence>
<comment type="function">
    <text evidence="1">This protein is one of the two subunits of integration host factor, a specific DNA-binding protein that functions in genetic recombination as well as in transcriptional and translational control.</text>
</comment>
<comment type="subunit">
    <text evidence="1">Heterodimer of an alpha and a beta chain.</text>
</comment>
<comment type="similarity">
    <text evidence="1">Belongs to the bacterial histone-like protein family.</text>
</comment>
<accession>Q136S3</accession>
<evidence type="ECO:0000255" key="1">
    <source>
        <dbReference type="HAMAP-Rule" id="MF_00380"/>
    </source>
</evidence>
<evidence type="ECO:0000256" key="2">
    <source>
        <dbReference type="SAM" id="MobiDB-lite"/>
    </source>
</evidence>
<proteinExistence type="inferred from homology"/>